<accession>Q9VIF1</accession>
<accession>Q8MSZ9</accession>
<protein>
    <recommendedName>
        <fullName>Exonuclease mut-7 homolog</fullName>
        <ecNumber>3.1.-.-</ecNumber>
    </recommendedName>
    <alternativeName>
        <fullName>Exonuclease 3'-5' domain-containing protein 3 homolog</fullName>
    </alternativeName>
    <alternativeName>
        <fullName>Protein nibbler</fullName>
    </alternativeName>
</protein>
<proteinExistence type="evidence at protein level"/>
<dbReference type="EC" id="3.1.-.-"/>
<dbReference type="EMBL" id="AE014134">
    <property type="protein sequence ID" value="AAF53970.1"/>
    <property type="molecule type" value="Genomic_DNA"/>
</dbReference>
<dbReference type="EMBL" id="AY118462">
    <property type="protein sequence ID" value="AAM49831.1"/>
    <property type="molecule type" value="mRNA"/>
</dbReference>
<dbReference type="RefSeq" id="NP_610094.1">
    <property type="nucleotide sequence ID" value="NM_136250.4"/>
</dbReference>
<dbReference type="PDB" id="7JW6">
    <property type="method" value="X-ray"/>
    <property type="resolution" value="1.50 A"/>
    <property type="chains" value="A=395-625"/>
</dbReference>
<dbReference type="PDBsum" id="7JW6"/>
<dbReference type="SMR" id="Q9VIF1"/>
<dbReference type="BioGRID" id="61340">
    <property type="interactions" value="5"/>
</dbReference>
<dbReference type="FunCoup" id="Q9VIF1">
    <property type="interactions" value="649"/>
</dbReference>
<dbReference type="IntAct" id="Q9VIF1">
    <property type="interactions" value="4"/>
</dbReference>
<dbReference type="STRING" id="7227.FBpp0081027"/>
<dbReference type="iPTMnet" id="Q9VIF1"/>
<dbReference type="PaxDb" id="7227-FBpp0081027"/>
<dbReference type="DNASU" id="35385"/>
<dbReference type="EnsemblMetazoa" id="FBtr0081499">
    <property type="protein sequence ID" value="FBpp0081027"/>
    <property type="gene ID" value="FBgn0032924"/>
</dbReference>
<dbReference type="GeneID" id="35385"/>
<dbReference type="KEGG" id="dme:Dmel_CG9247"/>
<dbReference type="UCSC" id="CG9247-RA">
    <property type="organism name" value="d. melanogaster"/>
</dbReference>
<dbReference type="AGR" id="FB:FBgn0032924"/>
<dbReference type="CTD" id="35385"/>
<dbReference type="FlyBase" id="FBgn0032924">
    <property type="gene designation" value="Nbr"/>
</dbReference>
<dbReference type="VEuPathDB" id="VectorBase:FBgn0032924"/>
<dbReference type="eggNOG" id="KOG2207">
    <property type="taxonomic scope" value="Eukaryota"/>
</dbReference>
<dbReference type="GeneTree" id="ENSGT00390000006843"/>
<dbReference type="HOGENOM" id="CLU_437604_0_0_1"/>
<dbReference type="InParanoid" id="Q9VIF1"/>
<dbReference type="OMA" id="CSNWANR"/>
<dbReference type="OrthoDB" id="18193at2759"/>
<dbReference type="PhylomeDB" id="Q9VIF1"/>
<dbReference type="BioGRID-ORCS" id="35385">
    <property type="hits" value="0 hits in 1 CRISPR screen"/>
</dbReference>
<dbReference type="GenomeRNAi" id="35385"/>
<dbReference type="PRO" id="PR:Q9VIF1"/>
<dbReference type="Proteomes" id="UP000000803">
    <property type="component" value="Chromosome 2L"/>
</dbReference>
<dbReference type="Bgee" id="FBgn0032924">
    <property type="expression patterns" value="Expressed in adult abdomen and 68 other cell types or tissues"/>
</dbReference>
<dbReference type="ExpressionAtlas" id="Q9VIF1">
    <property type="expression patterns" value="baseline and differential"/>
</dbReference>
<dbReference type="GO" id="GO:0005737">
    <property type="term" value="C:cytoplasm"/>
    <property type="evidence" value="ECO:0000318"/>
    <property type="project" value="GO_Central"/>
</dbReference>
<dbReference type="GO" id="GO:0005634">
    <property type="term" value="C:nucleus"/>
    <property type="evidence" value="ECO:0000318"/>
    <property type="project" value="GO_Central"/>
</dbReference>
<dbReference type="GO" id="GO:0043186">
    <property type="term" value="C:P granule"/>
    <property type="evidence" value="ECO:0000314"/>
    <property type="project" value="FlyBase"/>
</dbReference>
<dbReference type="GO" id="GO:1990904">
    <property type="term" value="C:ribonucleoprotein complex"/>
    <property type="evidence" value="ECO:0000314"/>
    <property type="project" value="FlyBase"/>
</dbReference>
<dbReference type="GO" id="GO:0008408">
    <property type="term" value="F:3'-5' exonuclease activity"/>
    <property type="evidence" value="ECO:0000318"/>
    <property type="project" value="GO_Central"/>
</dbReference>
<dbReference type="GO" id="GO:0044748">
    <property type="term" value="F:3'-5'-exoribonuclease activity involved in mature miRNA 3'-end processing"/>
    <property type="evidence" value="ECO:0000315"/>
    <property type="project" value="FlyBase"/>
</dbReference>
<dbReference type="GO" id="GO:0000175">
    <property type="term" value="F:3'-5'-RNA exonuclease activity"/>
    <property type="evidence" value="ECO:0000315"/>
    <property type="project" value="FlyBase"/>
</dbReference>
<dbReference type="GO" id="GO:0046872">
    <property type="term" value="F:metal ion binding"/>
    <property type="evidence" value="ECO:0007669"/>
    <property type="project" value="UniProtKB-KW"/>
</dbReference>
<dbReference type="GO" id="GO:0003676">
    <property type="term" value="F:nucleic acid binding"/>
    <property type="evidence" value="ECO:0007669"/>
    <property type="project" value="InterPro"/>
</dbReference>
<dbReference type="GO" id="GO:0035196">
    <property type="term" value="P:miRNA processing"/>
    <property type="evidence" value="ECO:0000315"/>
    <property type="project" value="FlyBase"/>
</dbReference>
<dbReference type="GO" id="GO:0034587">
    <property type="term" value="P:piRNA processing"/>
    <property type="evidence" value="ECO:0000315"/>
    <property type="project" value="FlyBase"/>
</dbReference>
<dbReference type="GO" id="GO:0044747">
    <property type="term" value="P:pre-miRNA 3'-end processing"/>
    <property type="evidence" value="ECO:0000315"/>
    <property type="project" value="FlyBase"/>
</dbReference>
<dbReference type="GO" id="GO:0140990">
    <property type="term" value="P:primary piRNA processing"/>
    <property type="evidence" value="ECO:0000315"/>
    <property type="project" value="FlyBase"/>
</dbReference>
<dbReference type="GO" id="GO:0140965">
    <property type="term" value="P:secondary piRNA processing"/>
    <property type="evidence" value="ECO:0000315"/>
    <property type="project" value="FlyBase"/>
</dbReference>
<dbReference type="GO" id="GO:0010526">
    <property type="term" value="P:transposable element silencing"/>
    <property type="evidence" value="ECO:0000315"/>
    <property type="project" value="FlyBase"/>
</dbReference>
<dbReference type="CDD" id="cd06146">
    <property type="entry name" value="mut-7_like_exo"/>
    <property type="match status" value="1"/>
</dbReference>
<dbReference type="FunFam" id="3.30.420.10:FF:000224">
    <property type="entry name" value="RE72821p1"/>
    <property type="match status" value="1"/>
</dbReference>
<dbReference type="Gene3D" id="3.30.420.10">
    <property type="entry name" value="Ribonuclease H-like superfamily/Ribonuclease H"/>
    <property type="match status" value="1"/>
</dbReference>
<dbReference type="InterPro" id="IPR002562">
    <property type="entry name" value="3'-5'_exonuclease_dom"/>
</dbReference>
<dbReference type="InterPro" id="IPR052408">
    <property type="entry name" value="Exonuclease_MUT-7-like"/>
</dbReference>
<dbReference type="InterPro" id="IPR037432">
    <property type="entry name" value="Mut-7_DEDDy_dom"/>
</dbReference>
<dbReference type="InterPro" id="IPR012337">
    <property type="entry name" value="RNaseH-like_sf"/>
</dbReference>
<dbReference type="InterPro" id="IPR036397">
    <property type="entry name" value="RNaseH_sf"/>
</dbReference>
<dbReference type="PANTHER" id="PTHR47765">
    <property type="entry name" value="3'-5' EXONUCLEASE DOMAIN-CONTAINING PROTEIN"/>
    <property type="match status" value="1"/>
</dbReference>
<dbReference type="PANTHER" id="PTHR47765:SF2">
    <property type="entry name" value="EXONUCLEASE MUT-7 HOMOLOG"/>
    <property type="match status" value="1"/>
</dbReference>
<dbReference type="Pfam" id="PF01612">
    <property type="entry name" value="DNA_pol_A_exo1"/>
    <property type="match status" value="1"/>
</dbReference>
<dbReference type="SMART" id="SM00474">
    <property type="entry name" value="35EXOc"/>
    <property type="match status" value="1"/>
</dbReference>
<dbReference type="SUPFAM" id="SSF53098">
    <property type="entry name" value="Ribonuclease H-like"/>
    <property type="match status" value="1"/>
</dbReference>
<name>MUT7_DROME</name>
<sequence>MARKSHMYNAIPAGFESDEENMENLMSNLKIKRLEDITTGAGIDGCNFDATLDAKAEEFFKLFREKWNMYSKKKSPHLRQEFGRALMGHQDPLLLALKIFANCPDSSNIKTKSLSHFVLDTVCKLHKDFPHLGEGCDPNTSMIAFNFVKTSGLLALNNAVIHAYSLRQIRDLLLPKLRELLDNGLYKEVTQWSISLQLTHEFDMLELAFPLIAIEKLPLAEEYLDHATQQRLPFVKFLDSLLHKEKSVLELCEHLLDRYKNLKISHNVLSYRPMAKIVARLAKKYGFDDAVTPNYKFTKTCSYLHYLYREYEKTRMNLASFREVVSVHAFNHELRTDFVKYLASAGAHSEAIYWYTEFNIDPKDCPLEIETQVSQNGAGKASGWESPGKERCPSSRCDMYLTMDLPDECLIIVNKADEFDRMLYHLQQECVIYLDSEWMQSVCGDNQLCVLQIATGHNVYLIDCLARESLRSEHWRLLGANIFNNVNIRKVGFSMVSDLSVLQRSLPLQLRLQMPHHYLDLRNLWLELKKQRFGVELPFGNVNRAGDALTDLSLACLGKKLNKSNQCSNWANRPLRREQILYAAIDARCLMLIYNTLIERVSFIQAVIEKSIASNNFLRRGAHVK</sequence>
<reference key="1">
    <citation type="journal article" date="2000" name="Science">
        <title>The genome sequence of Drosophila melanogaster.</title>
        <authorList>
            <person name="Adams M.D."/>
            <person name="Celniker S.E."/>
            <person name="Holt R.A."/>
            <person name="Evans C.A."/>
            <person name="Gocayne J.D."/>
            <person name="Amanatides P.G."/>
            <person name="Scherer S.E."/>
            <person name="Li P.W."/>
            <person name="Hoskins R.A."/>
            <person name="Galle R.F."/>
            <person name="George R.A."/>
            <person name="Lewis S.E."/>
            <person name="Richards S."/>
            <person name="Ashburner M."/>
            <person name="Henderson S.N."/>
            <person name="Sutton G.G."/>
            <person name="Wortman J.R."/>
            <person name="Yandell M.D."/>
            <person name="Zhang Q."/>
            <person name="Chen L.X."/>
            <person name="Brandon R.C."/>
            <person name="Rogers Y.-H.C."/>
            <person name="Blazej R.G."/>
            <person name="Champe M."/>
            <person name="Pfeiffer B.D."/>
            <person name="Wan K.H."/>
            <person name="Doyle C."/>
            <person name="Baxter E.G."/>
            <person name="Helt G."/>
            <person name="Nelson C.R."/>
            <person name="Miklos G.L.G."/>
            <person name="Abril J.F."/>
            <person name="Agbayani A."/>
            <person name="An H.-J."/>
            <person name="Andrews-Pfannkoch C."/>
            <person name="Baldwin D."/>
            <person name="Ballew R.M."/>
            <person name="Basu A."/>
            <person name="Baxendale J."/>
            <person name="Bayraktaroglu L."/>
            <person name="Beasley E.M."/>
            <person name="Beeson K.Y."/>
            <person name="Benos P.V."/>
            <person name="Berman B.P."/>
            <person name="Bhandari D."/>
            <person name="Bolshakov S."/>
            <person name="Borkova D."/>
            <person name="Botchan M.R."/>
            <person name="Bouck J."/>
            <person name="Brokstein P."/>
            <person name="Brottier P."/>
            <person name="Burtis K.C."/>
            <person name="Busam D.A."/>
            <person name="Butler H."/>
            <person name="Cadieu E."/>
            <person name="Center A."/>
            <person name="Chandra I."/>
            <person name="Cherry J.M."/>
            <person name="Cawley S."/>
            <person name="Dahlke C."/>
            <person name="Davenport L.B."/>
            <person name="Davies P."/>
            <person name="de Pablos B."/>
            <person name="Delcher A."/>
            <person name="Deng Z."/>
            <person name="Mays A.D."/>
            <person name="Dew I."/>
            <person name="Dietz S.M."/>
            <person name="Dodson K."/>
            <person name="Doup L.E."/>
            <person name="Downes M."/>
            <person name="Dugan-Rocha S."/>
            <person name="Dunkov B.C."/>
            <person name="Dunn P."/>
            <person name="Durbin K.J."/>
            <person name="Evangelista C.C."/>
            <person name="Ferraz C."/>
            <person name="Ferriera S."/>
            <person name="Fleischmann W."/>
            <person name="Fosler C."/>
            <person name="Gabrielian A.E."/>
            <person name="Garg N.S."/>
            <person name="Gelbart W.M."/>
            <person name="Glasser K."/>
            <person name="Glodek A."/>
            <person name="Gong F."/>
            <person name="Gorrell J.H."/>
            <person name="Gu Z."/>
            <person name="Guan P."/>
            <person name="Harris M."/>
            <person name="Harris N.L."/>
            <person name="Harvey D.A."/>
            <person name="Heiman T.J."/>
            <person name="Hernandez J.R."/>
            <person name="Houck J."/>
            <person name="Hostin D."/>
            <person name="Houston K.A."/>
            <person name="Howland T.J."/>
            <person name="Wei M.-H."/>
            <person name="Ibegwam C."/>
            <person name="Jalali M."/>
            <person name="Kalush F."/>
            <person name="Karpen G.H."/>
            <person name="Ke Z."/>
            <person name="Kennison J.A."/>
            <person name="Ketchum K.A."/>
            <person name="Kimmel B.E."/>
            <person name="Kodira C.D."/>
            <person name="Kraft C.L."/>
            <person name="Kravitz S."/>
            <person name="Kulp D."/>
            <person name="Lai Z."/>
            <person name="Lasko P."/>
            <person name="Lei Y."/>
            <person name="Levitsky A.A."/>
            <person name="Li J.H."/>
            <person name="Li Z."/>
            <person name="Liang Y."/>
            <person name="Lin X."/>
            <person name="Liu X."/>
            <person name="Mattei B."/>
            <person name="McIntosh T.C."/>
            <person name="McLeod M.P."/>
            <person name="McPherson D."/>
            <person name="Merkulov G."/>
            <person name="Milshina N.V."/>
            <person name="Mobarry C."/>
            <person name="Morris J."/>
            <person name="Moshrefi A."/>
            <person name="Mount S.M."/>
            <person name="Moy M."/>
            <person name="Murphy B."/>
            <person name="Murphy L."/>
            <person name="Muzny D.M."/>
            <person name="Nelson D.L."/>
            <person name="Nelson D.R."/>
            <person name="Nelson K.A."/>
            <person name="Nixon K."/>
            <person name="Nusskern D.R."/>
            <person name="Pacleb J.M."/>
            <person name="Palazzolo M."/>
            <person name="Pittman G.S."/>
            <person name="Pan S."/>
            <person name="Pollard J."/>
            <person name="Puri V."/>
            <person name="Reese M.G."/>
            <person name="Reinert K."/>
            <person name="Remington K."/>
            <person name="Saunders R.D.C."/>
            <person name="Scheeler F."/>
            <person name="Shen H."/>
            <person name="Shue B.C."/>
            <person name="Siden-Kiamos I."/>
            <person name="Simpson M."/>
            <person name="Skupski M.P."/>
            <person name="Smith T.J."/>
            <person name="Spier E."/>
            <person name="Spradling A.C."/>
            <person name="Stapleton M."/>
            <person name="Strong R."/>
            <person name="Sun E."/>
            <person name="Svirskas R."/>
            <person name="Tector C."/>
            <person name="Turner R."/>
            <person name="Venter E."/>
            <person name="Wang A.H."/>
            <person name="Wang X."/>
            <person name="Wang Z.-Y."/>
            <person name="Wassarman D.A."/>
            <person name="Weinstock G.M."/>
            <person name="Weissenbach J."/>
            <person name="Williams S.M."/>
            <person name="Woodage T."/>
            <person name="Worley K.C."/>
            <person name="Wu D."/>
            <person name="Yang S."/>
            <person name="Yao Q.A."/>
            <person name="Ye J."/>
            <person name="Yeh R.-F."/>
            <person name="Zaveri J.S."/>
            <person name="Zhan M."/>
            <person name="Zhang G."/>
            <person name="Zhao Q."/>
            <person name="Zheng L."/>
            <person name="Zheng X.H."/>
            <person name="Zhong F.N."/>
            <person name="Zhong W."/>
            <person name="Zhou X."/>
            <person name="Zhu S.C."/>
            <person name="Zhu X."/>
            <person name="Smith H.O."/>
            <person name="Gibbs R.A."/>
            <person name="Myers E.W."/>
            <person name="Rubin G.M."/>
            <person name="Venter J.C."/>
        </authorList>
    </citation>
    <scope>NUCLEOTIDE SEQUENCE [LARGE SCALE GENOMIC DNA]</scope>
    <source>
        <strain>Berkeley</strain>
    </source>
</reference>
<reference key="2">
    <citation type="journal article" date="2002" name="Genome Biol.">
        <title>Annotation of the Drosophila melanogaster euchromatic genome: a systematic review.</title>
        <authorList>
            <person name="Misra S."/>
            <person name="Crosby M.A."/>
            <person name="Mungall C.J."/>
            <person name="Matthews B.B."/>
            <person name="Campbell K.S."/>
            <person name="Hradecky P."/>
            <person name="Huang Y."/>
            <person name="Kaminker J.S."/>
            <person name="Millburn G.H."/>
            <person name="Prochnik S.E."/>
            <person name="Smith C.D."/>
            <person name="Tupy J.L."/>
            <person name="Whitfield E.J."/>
            <person name="Bayraktaroglu L."/>
            <person name="Berman B.P."/>
            <person name="Bettencourt B.R."/>
            <person name="Celniker S.E."/>
            <person name="de Grey A.D.N.J."/>
            <person name="Drysdale R.A."/>
            <person name="Harris N.L."/>
            <person name="Richter J."/>
            <person name="Russo S."/>
            <person name="Schroeder A.J."/>
            <person name="Shu S.Q."/>
            <person name="Stapleton M."/>
            <person name="Yamada C."/>
            <person name="Ashburner M."/>
            <person name="Gelbart W.M."/>
            <person name="Rubin G.M."/>
            <person name="Lewis S.E."/>
        </authorList>
    </citation>
    <scope>GENOME REANNOTATION</scope>
    <source>
        <strain>Berkeley</strain>
    </source>
</reference>
<reference key="3">
    <citation type="journal article" date="2002" name="Genome Biol.">
        <title>A Drosophila full-length cDNA resource.</title>
        <authorList>
            <person name="Stapleton M."/>
            <person name="Carlson J.W."/>
            <person name="Brokstein P."/>
            <person name="Yu C."/>
            <person name="Champe M."/>
            <person name="George R.A."/>
            <person name="Guarin H."/>
            <person name="Kronmiller B."/>
            <person name="Pacleb J.M."/>
            <person name="Park S."/>
            <person name="Wan K.H."/>
            <person name="Rubin G.M."/>
            <person name="Celniker S.E."/>
        </authorList>
    </citation>
    <scope>NUCLEOTIDE SEQUENCE [LARGE SCALE MRNA]</scope>
    <source>
        <strain>Berkeley</strain>
        <tissue>Ovary</tissue>
    </source>
</reference>
<reference key="4">
    <citation type="journal article" date="2008" name="J. Proteome Res.">
        <title>Phosphoproteome analysis of Drosophila melanogaster embryos.</title>
        <authorList>
            <person name="Zhai B."/>
            <person name="Villen J."/>
            <person name="Beausoleil S.A."/>
            <person name="Mintseris J."/>
            <person name="Gygi S.P."/>
        </authorList>
    </citation>
    <scope>PHOSPHORYLATION [LARGE SCALE ANALYSIS] AT SER-17</scope>
    <scope>IDENTIFICATION BY MASS SPECTROMETRY</scope>
    <source>
        <tissue>Embryo</tissue>
    </source>
</reference>
<reference key="5">
    <citation type="journal article" date="2011" name="Curr. Biol.">
        <title>The 3'-to-5' exoribonuclease Nibbler shapes the 3' ends of microRNAs bound to Drosophila Argonaute1.</title>
        <authorList>
            <person name="Han B.W."/>
            <person name="Hung J.H."/>
            <person name="Weng Z."/>
            <person name="Zamore P.D."/>
            <person name="Ameres S.L."/>
        </authorList>
    </citation>
    <scope>FUNCTION</scope>
    <scope>DISRUPTION PHENOTYPE</scope>
    <scope>COFACTOR</scope>
    <scope>MUTAGENESIS OF 435-ASP--GLU-437</scope>
</reference>
<reference key="6">
    <citation type="journal article" date="2011" name="Curr. Biol.">
        <title>The exoribonuclease Nibbler controls 3' end processing of microRNAs in Drosophila.</title>
        <authorList>
            <person name="Liu N."/>
            <person name="Abe M."/>
            <person name="Sabin L.R."/>
            <person name="Hendriks G.J."/>
            <person name="Naqvi A.S."/>
            <person name="Yu Z."/>
            <person name="Cherry S."/>
            <person name="Bonini N.M."/>
        </authorList>
    </citation>
    <scope>FUNCTION</scope>
    <scope>INTERACTION WITH AGO1</scope>
    <scope>DISRUPTION PHENOTYPE</scope>
</reference>
<organism>
    <name type="scientific">Drosophila melanogaster</name>
    <name type="common">Fruit fly</name>
    <dbReference type="NCBI Taxonomy" id="7227"/>
    <lineage>
        <taxon>Eukaryota</taxon>
        <taxon>Metazoa</taxon>
        <taxon>Ecdysozoa</taxon>
        <taxon>Arthropoda</taxon>
        <taxon>Hexapoda</taxon>
        <taxon>Insecta</taxon>
        <taxon>Pterygota</taxon>
        <taxon>Neoptera</taxon>
        <taxon>Endopterygota</taxon>
        <taxon>Diptera</taxon>
        <taxon>Brachycera</taxon>
        <taxon>Muscomorpha</taxon>
        <taxon>Ephydroidea</taxon>
        <taxon>Drosophilidae</taxon>
        <taxon>Drosophila</taxon>
        <taxon>Sophophora</taxon>
    </lineage>
</organism>
<evidence type="ECO:0000269" key="1">
    <source>
    </source>
</evidence>
<evidence type="ECO:0000269" key="2">
    <source>
    </source>
</evidence>
<evidence type="ECO:0000269" key="3">
    <source>
    </source>
</evidence>
<evidence type="ECO:0000305" key="4"/>
<evidence type="ECO:0007829" key="5">
    <source>
        <dbReference type="PDB" id="7JW6"/>
    </source>
</evidence>
<gene>
    <name type="primary">Nbr</name>
    <name type="ORF">CG9247</name>
</gene>
<keyword id="KW-0002">3D-structure</keyword>
<keyword id="KW-0269">Exonuclease</keyword>
<keyword id="KW-0378">Hydrolase</keyword>
<keyword id="KW-0460">Magnesium</keyword>
<keyword id="KW-0479">Metal-binding</keyword>
<keyword id="KW-0540">Nuclease</keyword>
<keyword id="KW-0597">Phosphoprotein</keyword>
<keyword id="KW-1185">Reference proteome</keyword>
<comment type="function">
    <text evidence="2 3">Possesses 3'-5' exoribonuclease activity. Required for 3'-end trimming of AGO1-bound miRNAs, in particular multiple-isoform miRNAs, which represents a critical step in miRNA maturation.</text>
</comment>
<comment type="cofactor">
    <cofactor evidence="3">
        <name>Mg(2+)</name>
        <dbReference type="ChEBI" id="CHEBI:18420"/>
    </cofactor>
</comment>
<comment type="subunit">
    <text evidence="2">Interacts with AGO1; the interaction is not RNA dependent.</text>
</comment>
<comment type="disruption phenotype">
    <text evidence="2 3">Homozygous semilethal and sterile. Mutant flies show accumulation of the longest isoforms of multiple-isoform miRNAs including miR-3 and miR-34.</text>
</comment>
<comment type="similarity">
    <text evidence="4">Belongs to the mut-7 family.</text>
</comment>
<feature type="chain" id="PRO_0000319061" description="Exonuclease mut-7 homolog">
    <location>
        <begin position="1"/>
        <end position="625"/>
    </location>
</feature>
<feature type="domain" description="3'-5' exonuclease">
    <location>
        <begin position="410"/>
        <end position="602"/>
    </location>
</feature>
<feature type="modified residue" description="Phosphoserine" evidence="1">
    <location>
        <position position="17"/>
    </location>
</feature>
<feature type="mutagenesis site" description="Reduces miR-34 trimming." evidence="3">
    <original>DSE</original>
    <variation>ASA</variation>
    <location>
        <begin position="435"/>
        <end position="437"/>
    </location>
</feature>
<feature type="sequence conflict" description="In Ref. 3; AAM49831." evidence="4" ref="3">
    <original>C</original>
    <variation>S</variation>
    <location>
        <position position="136"/>
    </location>
</feature>
<feature type="helix" evidence="5">
    <location>
        <begin position="407"/>
        <end position="409"/>
    </location>
</feature>
<feature type="strand" evidence="5">
    <location>
        <begin position="410"/>
        <end position="413"/>
    </location>
</feature>
<feature type="helix" evidence="5">
    <location>
        <begin position="416"/>
        <end position="426"/>
    </location>
</feature>
<feature type="strand" evidence="5">
    <location>
        <begin position="430"/>
        <end position="439"/>
    </location>
</feature>
<feature type="strand" evidence="5">
    <location>
        <begin position="442"/>
        <end position="444"/>
    </location>
</feature>
<feature type="strand" evidence="5">
    <location>
        <begin position="447"/>
        <end position="454"/>
    </location>
</feature>
<feature type="strand" evidence="5">
    <location>
        <begin position="459"/>
        <end position="463"/>
    </location>
</feature>
<feature type="turn" evidence="5">
    <location>
        <begin position="467"/>
        <end position="469"/>
    </location>
</feature>
<feature type="helix" evidence="5">
    <location>
        <begin position="472"/>
        <end position="481"/>
    </location>
</feature>
<feature type="turn" evidence="5">
    <location>
        <begin position="482"/>
        <end position="484"/>
    </location>
</feature>
<feature type="strand" evidence="5">
    <location>
        <begin position="488"/>
        <end position="494"/>
    </location>
</feature>
<feature type="helix" evidence="5">
    <location>
        <begin position="495"/>
        <end position="505"/>
    </location>
</feature>
<feature type="strand" evidence="5">
    <location>
        <begin position="518"/>
        <end position="520"/>
    </location>
</feature>
<feature type="helix" evidence="5">
    <location>
        <begin position="521"/>
        <end position="528"/>
    </location>
</feature>
<feature type="helix" evidence="5">
    <location>
        <begin position="542"/>
        <end position="544"/>
    </location>
</feature>
<feature type="helix" evidence="5">
    <location>
        <begin position="549"/>
        <end position="557"/>
    </location>
</feature>
<feature type="turn" evidence="5">
    <location>
        <begin position="564"/>
        <end position="567"/>
    </location>
</feature>
<feature type="helix" evidence="5">
    <location>
        <begin position="577"/>
        <end position="600"/>
    </location>
</feature>
<feature type="helix" evidence="5">
    <location>
        <begin position="604"/>
        <end position="614"/>
    </location>
</feature>
<feature type="strand" evidence="5">
    <location>
        <begin position="617"/>
        <end position="619"/>
    </location>
</feature>